<evidence type="ECO:0000250" key="1"/>
<evidence type="ECO:0000250" key="2">
    <source>
        <dbReference type="UniProtKB" id="Q9D8C2"/>
    </source>
</evidence>
<evidence type="ECO:0000255" key="3"/>
<evidence type="ECO:0000305" key="4"/>
<name>TSN13_RAT</name>
<sequence>MVCGGFSCSKNCLCALNLLYTLVSLLLIGIAAWGIGFGLISSLRVVGVVIAVGIFLFLIALVGLIGAVKHHQVLLFFYMIILLLVFIVQFSVSCACLALNREQQGQLLEVGWNNTASARNDIQRNLNCCGFRNYNPNDTCPASCAKSNQKCSSCAPIIGEYAGEVLRFVGGIGLFFSFTEILGVWLTYRYRNQKDPRANPSAFL</sequence>
<protein>
    <recommendedName>
        <fullName>Tetraspanin-13</fullName>
        <shortName>Tspan-13</shortName>
    </recommendedName>
    <alternativeName>
        <fullName>Transmembrane 4 superfamily member 13</fullName>
    </alternativeName>
</protein>
<proteinExistence type="evidence at transcript level"/>
<accession>Q5FVL6</accession>
<organism>
    <name type="scientific">Rattus norvegicus</name>
    <name type="common">Rat</name>
    <dbReference type="NCBI Taxonomy" id="10116"/>
    <lineage>
        <taxon>Eukaryota</taxon>
        <taxon>Metazoa</taxon>
        <taxon>Chordata</taxon>
        <taxon>Craniata</taxon>
        <taxon>Vertebrata</taxon>
        <taxon>Euteleostomi</taxon>
        <taxon>Mammalia</taxon>
        <taxon>Eutheria</taxon>
        <taxon>Euarchontoglires</taxon>
        <taxon>Glires</taxon>
        <taxon>Rodentia</taxon>
        <taxon>Myomorpha</taxon>
        <taxon>Muroidea</taxon>
        <taxon>Muridae</taxon>
        <taxon>Murinae</taxon>
        <taxon>Rattus</taxon>
    </lineage>
</organism>
<gene>
    <name type="primary">Tspan13</name>
    <name type="synonym">Tm4sf13</name>
</gene>
<keyword id="KW-0325">Glycoprotein</keyword>
<keyword id="KW-0472">Membrane</keyword>
<keyword id="KW-0597">Phosphoprotein</keyword>
<keyword id="KW-1185">Reference proteome</keyword>
<keyword id="KW-0812">Transmembrane</keyword>
<keyword id="KW-1133">Transmembrane helix</keyword>
<comment type="subcellular location">
    <subcellularLocation>
        <location evidence="4">Membrane</location>
        <topology evidence="4">Multi-pass membrane protein</topology>
    </subcellularLocation>
</comment>
<comment type="similarity">
    <text evidence="4">Belongs to the tetraspanin (TM4SF) family.</text>
</comment>
<reference key="1">
    <citation type="journal article" date="2004" name="Genome Res.">
        <title>The status, quality, and expansion of the NIH full-length cDNA project: the Mammalian Gene Collection (MGC).</title>
        <authorList>
            <consortium name="The MGC Project Team"/>
        </authorList>
    </citation>
    <scope>NUCLEOTIDE SEQUENCE [LARGE SCALE MRNA]</scope>
    <source>
        <tissue>Lung</tissue>
    </source>
</reference>
<dbReference type="EMBL" id="BC089906">
    <property type="protein sequence ID" value="AAH89906.1"/>
    <property type="molecule type" value="mRNA"/>
</dbReference>
<dbReference type="RefSeq" id="NP_001013262.1">
    <property type="nucleotide sequence ID" value="NM_001013244.1"/>
</dbReference>
<dbReference type="SMR" id="Q5FVL6"/>
<dbReference type="FunCoup" id="Q5FVL6">
    <property type="interactions" value="1662"/>
</dbReference>
<dbReference type="STRING" id="10116.ENSRNOP00000006752"/>
<dbReference type="GlyCosmos" id="Q5FVL6">
    <property type="glycosylation" value="2 sites, No reported glycans"/>
</dbReference>
<dbReference type="GlyGen" id="Q5FVL6">
    <property type="glycosylation" value="2 sites"/>
</dbReference>
<dbReference type="iPTMnet" id="Q5FVL6"/>
<dbReference type="PhosphoSitePlus" id="Q5FVL6"/>
<dbReference type="PaxDb" id="10116-ENSRNOP00000006752"/>
<dbReference type="Ensembl" id="ENSRNOT00000006752.6">
    <property type="protein sequence ID" value="ENSRNOP00000006752.3"/>
    <property type="gene ID" value="ENSRNOG00000005046.7"/>
</dbReference>
<dbReference type="GeneID" id="366602"/>
<dbReference type="KEGG" id="rno:366602"/>
<dbReference type="UCSC" id="RGD:1311788">
    <property type="organism name" value="rat"/>
</dbReference>
<dbReference type="AGR" id="RGD:1311788"/>
<dbReference type="CTD" id="27075"/>
<dbReference type="RGD" id="1311788">
    <property type="gene designation" value="Tspan13"/>
</dbReference>
<dbReference type="eggNOG" id="KOG3882">
    <property type="taxonomic scope" value="Eukaryota"/>
</dbReference>
<dbReference type="GeneTree" id="ENSGT00940000157010"/>
<dbReference type="HOGENOM" id="CLU_088363_0_0_1"/>
<dbReference type="InParanoid" id="Q5FVL6"/>
<dbReference type="OMA" id="CPPCAPI"/>
<dbReference type="OrthoDB" id="5845060at2759"/>
<dbReference type="PhylomeDB" id="Q5FVL6"/>
<dbReference type="TreeFam" id="TF323367"/>
<dbReference type="PRO" id="PR:Q5FVL6"/>
<dbReference type="Proteomes" id="UP000002494">
    <property type="component" value="Chromosome 6"/>
</dbReference>
<dbReference type="Bgee" id="ENSRNOG00000005046">
    <property type="expression patterns" value="Expressed in stomach and 19 other cell types or tissues"/>
</dbReference>
<dbReference type="GO" id="GO:0005886">
    <property type="term" value="C:plasma membrane"/>
    <property type="evidence" value="ECO:0000266"/>
    <property type="project" value="RGD"/>
</dbReference>
<dbReference type="GO" id="GO:0005246">
    <property type="term" value="F:calcium channel regulator activity"/>
    <property type="evidence" value="ECO:0000266"/>
    <property type="project" value="RGD"/>
</dbReference>
<dbReference type="GO" id="GO:1903169">
    <property type="term" value="P:regulation of calcium ion transmembrane transport"/>
    <property type="evidence" value="ECO:0000266"/>
    <property type="project" value="RGD"/>
</dbReference>
<dbReference type="InterPro" id="IPR018499">
    <property type="entry name" value="Tetraspanin/Peripherin"/>
</dbReference>
<dbReference type="InterPro" id="IPR000301">
    <property type="entry name" value="Tetraspanin_animals"/>
</dbReference>
<dbReference type="InterPro" id="IPR008952">
    <property type="entry name" value="Tetraspanin_EC2_sf"/>
</dbReference>
<dbReference type="PANTHER" id="PTHR19282">
    <property type="entry name" value="TETRASPANIN"/>
    <property type="match status" value="1"/>
</dbReference>
<dbReference type="PANTHER" id="PTHR19282:SF203">
    <property type="entry name" value="TETRASPANIN-13"/>
    <property type="match status" value="1"/>
</dbReference>
<dbReference type="Pfam" id="PF00335">
    <property type="entry name" value="Tetraspanin"/>
    <property type="match status" value="1"/>
</dbReference>
<dbReference type="PIRSF" id="PIRSF002419">
    <property type="entry name" value="Tetraspanin"/>
    <property type="match status" value="1"/>
</dbReference>
<dbReference type="PRINTS" id="PR00259">
    <property type="entry name" value="TMFOUR"/>
</dbReference>
<dbReference type="SUPFAM" id="SSF48652">
    <property type="entry name" value="Tetraspanin"/>
    <property type="match status" value="1"/>
</dbReference>
<feature type="chain" id="PRO_0000219260" description="Tetraspanin-13">
    <location>
        <begin position="1"/>
        <end position="204"/>
    </location>
</feature>
<feature type="topological domain" description="Cytoplasmic" evidence="3">
    <location>
        <begin position="1"/>
        <end position="19"/>
    </location>
</feature>
<feature type="transmembrane region" description="Helical" evidence="3">
    <location>
        <begin position="20"/>
        <end position="40"/>
    </location>
</feature>
<feature type="topological domain" description="Extracellular" evidence="3">
    <location>
        <begin position="41"/>
        <end position="44"/>
    </location>
</feature>
<feature type="transmembrane region" description="Helical" evidence="3">
    <location>
        <begin position="45"/>
        <end position="65"/>
    </location>
</feature>
<feature type="topological domain" description="Cytoplasmic" evidence="3">
    <location>
        <begin position="66"/>
        <end position="72"/>
    </location>
</feature>
<feature type="transmembrane region" description="Helical" evidence="3">
    <location>
        <begin position="73"/>
        <end position="93"/>
    </location>
</feature>
<feature type="topological domain" description="Extracellular" evidence="3">
    <location>
        <begin position="94"/>
        <end position="167"/>
    </location>
</feature>
<feature type="transmembrane region" description="Helical" evidence="3">
    <location>
        <begin position="168"/>
        <end position="188"/>
    </location>
</feature>
<feature type="topological domain" description="Cytoplasmic" evidence="3">
    <location>
        <begin position="189"/>
        <end position="204"/>
    </location>
</feature>
<feature type="modified residue" description="Phosphoserine" evidence="2">
    <location>
        <position position="143"/>
    </location>
</feature>
<feature type="glycosylation site" description="N-linked (GlcNAc...) asparagine" evidence="1">
    <location>
        <position position="113"/>
    </location>
</feature>
<feature type="glycosylation site" description="N-linked (GlcNAc...) asparagine" evidence="1">
    <location>
        <position position="137"/>
    </location>
</feature>